<evidence type="ECO:0000255" key="1">
    <source>
        <dbReference type="HAMAP-Rule" id="MF_00580"/>
    </source>
</evidence>
<protein>
    <recommendedName>
        <fullName evidence="1">Co-chaperonin GroES</fullName>
    </recommendedName>
    <alternativeName>
        <fullName evidence="1">10 kDa chaperonin</fullName>
    </alternativeName>
    <alternativeName>
        <fullName evidence="1">Chaperonin-10</fullName>
        <shortName evidence="1">Cpn10</shortName>
    </alternativeName>
</protein>
<name>CH10_HELMI</name>
<feature type="chain" id="PRO_1000129667" description="Co-chaperonin GroES">
    <location>
        <begin position="1"/>
        <end position="94"/>
    </location>
</feature>
<comment type="function">
    <text evidence="1">Together with the chaperonin GroEL, plays an essential role in assisting protein folding. The GroEL-GroES system forms a nano-cage that allows encapsulation of the non-native substrate proteins and provides a physical environment optimized to promote and accelerate protein folding. GroES binds to the apical surface of the GroEL ring, thereby capping the opening of the GroEL channel.</text>
</comment>
<comment type="subunit">
    <text evidence="1">Heptamer of 7 subunits arranged in a ring. Interacts with the chaperonin GroEL.</text>
</comment>
<comment type="subcellular location">
    <subcellularLocation>
        <location evidence="1">Cytoplasm</location>
    </subcellularLocation>
</comment>
<comment type="similarity">
    <text evidence="1">Belongs to the GroES chaperonin family.</text>
</comment>
<sequence>MNIKPLADRVVLKPIEAEEKTAFGIIVPDTAKEKPQQGEVVAVGIGRLLDNGERAALEVAVGDRVIYSKYSGTEIKIEGKEYLILNERDILAKL</sequence>
<gene>
    <name evidence="1" type="primary">groES</name>
    <name evidence="1" type="synonym">groS</name>
    <name type="ordered locus">Helmi_13730</name>
    <name type="ORF">HM1_1421</name>
</gene>
<dbReference type="EMBL" id="CP000930">
    <property type="protein sequence ID" value="ABZ83998.1"/>
    <property type="molecule type" value="Genomic_DNA"/>
</dbReference>
<dbReference type="RefSeq" id="WP_012282514.1">
    <property type="nucleotide sequence ID" value="NC_010337.2"/>
</dbReference>
<dbReference type="SMR" id="B0TC99"/>
<dbReference type="STRING" id="498761.HM1_1421"/>
<dbReference type="KEGG" id="hmo:HM1_1421"/>
<dbReference type="eggNOG" id="COG0234">
    <property type="taxonomic scope" value="Bacteria"/>
</dbReference>
<dbReference type="HOGENOM" id="CLU_132825_2_0_9"/>
<dbReference type="OrthoDB" id="9806791at2"/>
<dbReference type="Proteomes" id="UP000008550">
    <property type="component" value="Chromosome"/>
</dbReference>
<dbReference type="GO" id="GO:0005737">
    <property type="term" value="C:cytoplasm"/>
    <property type="evidence" value="ECO:0007669"/>
    <property type="project" value="UniProtKB-SubCell"/>
</dbReference>
<dbReference type="GO" id="GO:0005524">
    <property type="term" value="F:ATP binding"/>
    <property type="evidence" value="ECO:0007669"/>
    <property type="project" value="InterPro"/>
</dbReference>
<dbReference type="GO" id="GO:0046872">
    <property type="term" value="F:metal ion binding"/>
    <property type="evidence" value="ECO:0007669"/>
    <property type="project" value="TreeGrafter"/>
</dbReference>
<dbReference type="GO" id="GO:0044183">
    <property type="term" value="F:protein folding chaperone"/>
    <property type="evidence" value="ECO:0007669"/>
    <property type="project" value="InterPro"/>
</dbReference>
<dbReference type="GO" id="GO:0051087">
    <property type="term" value="F:protein-folding chaperone binding"/>
    <property type="evidence" value="ECO:0007669"/>
    <property type="project" value="TreeGrafter"/>
</dbReference>
<dbReference type="GO" id="GO:0051082">
    <property type="term" value="F:unfolded protein binding"/>
    <property type="evidence" value="ECO:0007669"/>
    <property type="project" value="TreeGrafter"/>
</dbReference>
<dbReference type="GO" id="GO:0051085">
    <property type="term" value="P:chaperone cofactor-dependent protein refolding"/>
    <property type="evidence" value="ECO:0007669"/>
    <property type="project" value="TreeGrafter"/>
</dbReference>
<dbReference type="CDD" id="cd00320">
    <property type="entry name" value="cpn10"/>
    <property type="match status" value="1"/>
</dbReference>
<dbReference type="FunFam" id="2.30.33.40:FF:000001">
    <property type="entry name" value="10 kDa chaperonin"/>
    <property type="match status" value="1"/>
</dbReference>
<dbReference type="Gene3D" id="2.30.33.40">
    <property type="entry name" value="GroES chaperonin"/>
    <property type="match status" value="1"/>
</dbReference>
<dbReference type="HAMAP" id="MF_00580">
    <property type="entry name" value="CH10"/>
    <property type="match status" value="1"/>
</dbReference>
<dbReference type="InterPro" id="IPR020818">
    <property type="entry name" value="Chaperonin_GroES"/>
</dbReference>
<dbReference type="InterPro" id="IPR037124">
    <property type="entry name" value="Chaperonin_GroES_sf"/>
</dbReference>
<dbReference type="InterPro" id="IPR011032">
    <property type="entry name" value="GroES-like_sf"/>
</dbReference>
<dbReference type="NCBIfam" id="NF001527">
    <property type="entry name" value="PRK00364.1-2"/>
    <property type="match status" value="1"/>
</dbReference>
<dbReference type="NCBIfam" id="NF001530">
    <property type="entry name" value="PRK00364.1-6"/>
    <property type="match status" value="1"/>
</dbReference>
<dbReference type="NCBIfam" id="NF001531">
    <property type="entry name" value="PRK00364.2-2"/>
    <property type="match status" value="1"/>
</dbReference>
<dbReference type="NCBIfam" id="NF001533">
    <property type="entry name" value="PRK00364.2-4"/>
    <property type="match status" value="1"/>
</dbReference>
<dbReference type="NCBIfam" id="NF001534">
    <property type="entry name" value="PRK00364.2-5"/>
    <property type="match status" value="1"/>
</dbReference>
<dbReference type="PANTHER" id="PTHR10772">
    <property type="entry name" value="10 KDA HEAT SHOCK PROTEIN"/>
    <property type="match status" value="1"/>
</dbReference>
<dbReference type="PANTHER" id="PTHR10772:SF58">
    <property type="entry name" value="CO-CHAPERONIN GROES"/>
    <property type="match status" value="1"/>
</dbReference>
<dbReference type="Pfam" id="PF00166">
    <property type="entry name" value="Cpn10"/>
    <property type="match status" value="1"/>
</dbReference>
<dbReference type="PRINTS" id="PR00297">
    <property type="entry name" value="CHAPERONIN10"/>
</dbReference>
<dbReference type="SMART" id="SM00883">
    <property type="entry name" value="Cpn10"/>
    <property type="match status" value="1"/>
</dbReference>
<dbReference type="SUPFAM" id="SSF50129">
    <property type="entry name" value="GroES-like"/>
    <property type="match status" value="1"/>
</dbReference>
<keyword id="KW-0143">Chaperone</keyword>
<keyword id="KW-0963">Cytoplasm</keyword>
<keyword id="KW-1185">Reference proteome</keyword>
<proteinExistence type="inferred from homology"/>
<reference key="1">
    <citation type="journal article" date="2008" name="J. Bacteriol.">
        <title>The genome of Heliobacterium modesticaldum, a phototrophic representative of the Firmicutes containing the simplest photosynthetic apparatus.</title>
        <authorList>
            <person name="Sattley W.M."/>
            <person name="Madigan M.T."/>
            <person name="Swingley W.D."/>
            <person name="Cheung P.C."/>
            <person name="Clocksin K.M."/>
            <person name="Conrad A.L."/>
            <person name="Dejesa L.C."/>
            <person name="Honchak B.M."/>
            <person name="Jung D.O."/>
            <person name="Karbach L.E."/>
            <person name="Kurdoglu A."/>
            <person name="Lahiri S."/>
            <person name="Mastrian S.D."/>
            <person name="Page L.E."/>
            <person name="Taylor H.L."/>
            <person name="Wang Z.T."/>
            <person name="Raymond J."/>
            <person name="Chen M."/>
            <person name="Blankenship R.E."/>
            <person name="Touchman J.W."/>
        </authorList>
    </citation>
    <scope>NUCLEOTIDE SEQUENCE [LARGE SCALE GENOMIC DNA]</scope>
    <source>
        <strain>ATCC 51547 / Ice1</strain>
    </source>
</reference>
<accession>B0TC99</accession>
<organism>
    <name type="scientific">Heliobacterium modesticaldum (strain ATCC 51547 / Ice1)</name>
    <dbReference type="NCBI Taxonomy" id="498761"/>
    <lineage>
        <taxon>Bacteria</taxon>
        <taxon>Bacillati</taxon>
        <taxon>Bacillota</taxon>
        <taxon>Clostridia</taxon>
        <taxon>Eubacteriales</taxon>
        <taxon>Heliobacteriaceae</taxon>
        <taxon>Heliomicrobium</taxon>
    </lineage>
</organism>